<dbReference type="EMBL" id="CP000817">
    <property type="protein sequence ID" value="ACA39025.1"/>
    <property type="molecule type" value="Genomic_DNA"/>
</dbReference>
<dbReference type="RefSeq" id="WP_004224819.1">
    <property type="nucleotide sequence ID" value="NC_010382.1"/>
</dbReference>
<dbReference type="SMR" id="B1HPX3"/>
<dbReference type="EnsemblBacteria" id="ACA39025">
    <property type="protein sequence ID" value="ACA39025"/>
    <property type="gene ID" value="Bsph_1419"/>
</dbReference>
<dbReference type="GeneID" id="74904004"/>
<dbReference type="KEGG" id="lsp:Bsph_1419"/>
<dbReference type="HOGENOM" id="CLU_129084_1_3_9"/>
<dbReference type="Proteomes" id="UP000002164">
    <property type="component" value="Chromosome"/>
</dbReference>
<dbReference type="GO" id="GO:0015934">
    <property type="term" value="C:large ribosomal subunit"/>
    <property type="evidence" value="ECO:0007669"/>
    <property type="project" value="InterPro"/>
</dbReference>
<dbReference type="GO" id="GO:0003735">
    <property type="term" value="F:structural constituent of ribosome"/>
    <property type="evidence" value="ECO:0007669"/>
    <property type="project" value="InterPro"/>
</dbReference>
<dbReference type="GO" id="GO:0006412">
    <property type="term" value="P:translation"/>
    <property type="evidence" value="ECO:0007669"/>
    <property type="project" value="UniProtKB-UniRule"/>
</dbReference>
<dbReference type="HAMAP" id="MF_00340">
    <property type="entry name" value="Ribosomal_bL32"/>
    <property type="match status" value="1"/>
</dbReference>
<dbReference type="InterPro" id="IPR002677">
    <property type="entry name" value="Ribosomal_bL32"/>
</dbReference>
<dbReference type="InterPro" id="IPR044957">
    <property type="entry name" value="Ribosomal_bL32_bact"/>
</dbReference>
<dbReference type="InterPro" id="IPR011332">
    <property type="entry name" value="Ribosomal_zn-bd"/>
</dbReference>
<dbReference type="NCBIfam" id="TIGR01031">
    <property type="entry name" value="rpmF_bact"/>
    <property type="match status" value="1"/>
</dbReference>
<dbReference type="PANTHER" id="PTHR35534">
    <property type="entry name" value="50S RIBOSOMAL PROTEIN L32"/>
    <property type="match status" value="1"/>
</dbReference>
<dbReference type="PANTHER" id="PTHR35534:SF2">
    <property type="entry name" value="LARGE RIBOSOMAL SUBUNIT PROTEIN BL32"/>
    <property type="match status" value="1"/>
</dbReference>
<dbReference type="Pfam" id="PF01783">
    <property type="entry name" value="Ribosomal_L32p"/>
    <property type="match status" value="1"/>
</dbReference>
<dbReference type="SUPFAM" id="SSF57829">
    <property type="entry name" value="Zn-binding ribosomal proteins"/>
    <property type="match status" value="1"/>
</dbReference>
<protein>
    <recommendedName>
        <fullName evidence="1">Large ribosomal subunit protein bL32</fullName>
    </recommendedName>
    <alternativeName>
        <fullName evidence="2">50S ribosomal protein L32</fullName>
    </alternativeName>
</protein>
<name>RL32_LYSSC</name>
<sequence>MAVPFRRTSKTAKRKRRTHFKLSVPGMVTCPNCGEAKLSHRVCKACGQYKGKEVVSK</sequence>
<feature type="chain" id="PRO_1000120140" description="Large ribosomal subunit protein bL32">
    <location>
        <begin position="1"/>
        <end position="57"/>
    </location>
</feature>
<gene>
    <name evidence="1" type="primary">rpmF</name>
    <name type="ordered locus">Bsph_1419</name>
</gene>
<accession>B1HPX3</accession>
<organism>
    <name type="scientific">Lysinibacillus sphaericus (strain C3-41)</name>
    <dbReference type="NCBI Taxonomy" id="444177"/>
    <lineage>
        <taxon>Bacteria</taxon>
        <taxon>Bacillati</taxon>
        <taxon>Bacillota</taxon>
        <taxon>Bacilli</taxon>
        <taxon>Bacillales</taxon>
        <taxon>Bacillaceae</taxon>
        <taxon>Lysinibacillus</taxon>
    </lineage>
</organism>
<reference key="1">
    <citation type="journal article" date="2008" name="J. Bacteriol.">
        <title>Complete genome sequence of the mosquitocidal bacterium Bacillus sphaericus C3-41 and comparison with those of closely related Bacillus species.</title>
        <authorList>
            <person name="Hu X."/>
            <person name="Fan W."/>
            <person name="Han B."/>
            <person name="Liu H."/>
            <person name="Zheng D."/>
            <person name="Li Q."/>
            <person name="Dong W."/>
            <person name="Yan J."/>
            <person name="Gao M."/>
            <person name="Berry C."/>
            <person name="Yuan Z."/>
        </authorList>
    </citation>
    <scope>NUCLEOTIDE SEQUENCE [LARGE SCALE GENOMIC DNA]</scope>
    <source>
        <strain>C3-41</strain>
    </source>
</reference>
<evidence type="ECO:0000255" key="1">
    <source>
        <dbReference type="HAMAP-Rule" id="MF_00340"/>
    </source>
</evidence>
<evidence type="ECO:0000305" key="2"/>
<keyword id="KW-0687">Ribonucleoprotein</keyword>
<keyword id="KW-0689">Ribosomal protein</keyword>
<comment type="similarity">
    <text evidence="1">Belongs to the bacterial ribosomal protein bL32 family.</text>
</comment>
<proteinExistence type="inferred from homology"/>